<sequence length="363" mass="39055">MKVAISGGGTGGHVYPALALIRELKKIHPEAEFLYIGTEKGLEAGIVKREGIPFEAIEITGFKRSLSLENIKTVMRFLSGAKKSKQILRDFKPDVVIGTGGYVCGPVVYAAAKLKIPTLIHEQNSVAGLTNKFLSRYTDKVAICFEEVSDSFASEKIVFTGNPRASEVVGVDSEGALETYGLVSGKPTVLVFGGSRGARGVNEAVEAILPEWNNRDFQLLYVTGDVHYEKIKDSLAELNLGNHISVQPFIYDMPKILNAVTLVVSRAGATTLAELTALGVPSILIPSPYVTANHQENNARALEKNNAAIVITEAELKNTDLMATVDSILNDEAKLNGMKLSAKQMGRPDAAAKLVEAVLSIMK</sequence>
<evidence type="ECO:0000255" key="1">
    <source>
        <dbReference type="HAMAP-Rule" id="MF_00033"/>
    </source>
</evidence>
<keyword id="KW-0131">Cell cycle</keyword>
<keyword id="KW-0132">Cell division</keyword>
<keyword id="KW-1003">Cell membrane</keyword>
<keyword id="KW-0133">Cell shape</keyword>
<keyword id="KW-0961">Cell wall biogenesis/degradation</keyword>
<keyword id="KW-0328">Glycosyltransferase</keyword>
<keyword id="KW-0472">Membrane</keyword>
<keyword id="KW-0573">Peptidoglycan synthesis</keyword>
<keyword id="KW-0808">Transferase</keyword>
<organism>
    <name type="scientific">Listeria monocytogenes serotype 4b (strain CLIP80459)</name>
    <dbReference type="NCBI Taxonomy" id="568819"/>
    <lineage>
        <taxon>Bacteria</taxon>
        <taxon>Bacillati</taxon>
        <taxon>Bacillota</taxon>
        <taxon>Bacilli</taxon>
        <taxon>Bacillales</taxon>
        <taxon>Listeriaceae</taxon>
        <taxon>Listeria</taxon>
    </lineage>
</organism>
<proteinExistence type="inferred from homology"/>
<protein>
    <recommendedName>
        <fullName evidence="1">UDP-N-acetylglucosamine--N-acetylmuramyl-(pentapeptide) pyrophosphoryl-undecaprenol N-acetylglucosamine transferase</fullName>
        <ecNumber evidence="1">2.4.1.227</ecNumber>
    </recommendedName>
    <alternativeName>
        <fullName evidence="1">Undecaprenyl-PP-MurNAc-pentapeptide-UDPGlcNAc GlcNAc transferase</fullName>
    </alternativeName>
</protein>
<comment type="function">
    <text evidence="1">Cell wall formation. Catalyzes the transfer of a GlcNAc subunit on undecaprenyl-pyrophosphoryl-MurNAc-pentapeptide (lipid intermediate I) to form undecaprenyl-pyrophosphoryl-MurNAc-(pentapeptide)GlcNAc (lipid intermediate II).</text>
</comment>
<comment type="catalytic activity">
    <reaction evidence="1">
        <text>di-trans,octa-cis-undecaprenyl diphospho-N-acetyl-alpha-D-muramoyl-L-alanyl-D-glutamyl-meso-2,6-diaminopimeloyl-D-alanyl-D-alanine + UDP-N-acetyl-alpha-D-glucosamine = di-trans,octa-cis-undecaprenyl diphospho-[N-acetyl-alpha-D-glucosaminyl-(1-&gt;4)]-N-acetyl-alpha-D-muramoyl-L-alanyl-D-glutamyl-meso-2,6-diaminopimeloyl-D-alanyl-D-alanine + UDP + H(+)</text>
        <dbReference type="Rhea" id="RHEA:31227"/>
        <dbReference type="ChEBI" id="CHEBI:15378"/>
        <dbReference type="ChEBI" id="CHEBI:57705"/>
        <dbReference type="ChEBI" id="CHEBI:58223"/>
        <dbReference type="ChEBI" id="CHEBI:61387"/>
        <dbReference type="ChEBI" id="CHEBI:61388"/>
        <dbReference type="EC" id="2.4.1.227"/>
    </reaction>
</comment>
<comment type="pathway">
    <text evidence="1">Cell wall biogenesis; peptidoglycan biosynthesis.</text>
</comment>
<comment type="subcellular location">
    <subcellularLocation>
        <location evidence="1">Cell membrane</location>
        <topology evidence="1">Peripheral membrane protein</topology>
        <orientation evidence="1">Cytoplasmic side</orientation>
    </subcellularLocation>
</comment>
<comment type="similarity">
    <text evidence="1">Belongs to the glycosyltransferase 28 family. MurG subfamily.</text>
</comment>
<accession>C1KWY8</accession>
<reference key="1">
    <citation type="journal article" date="2012" name="BMC Genomics">
        <title>Comparative genomics and transcriptomics of lineages I, II, and III strains of Listeria monocytogenes.</title>
        <authorList>
            <person name="Hain T."/>
            <person name="Ghai R."/>
            <person name="Billion A."/>
            <person name="Kuenne C.T."/>
            <person name="Steinweg C."/>
            <person name="Izar B."/>
            <person name="Mohamed W."/>
            <person name="Mraheil M."/>
            <person name="Domann E."/>
            <person name="Schaffrath S."/>
            <person name="Karst U."/>
            <person name="Goesmann A."/>
            <person name="Oehm S."/>
            <person name="Puhler A."/>
            <person name="Merkl R."/>
            <person name="Vorwerk S."/>
            <person name="Glaser P."/>
            <person name="Garrido P."/>
            <person name="Rusniok C."/>
            <person name="Buchrieser C."/>
            <person name="Goebel W."/>
            <person name="Chakraborty T."/>
        </authorList>
    </citation>
    <scope>NUCLEOTIDE SEQUENCE [LARGE SCALE GENOMIC DNA]</scope>
    <source>
        <strain>CLIP80459</strain>
    </source>
</reference>
<dbReference type="EC" id="2.4.1.227" evidence="1"/>
<dbReference type="EMBL" id="FM242711">
    <property type="protein sequence ID" value="CAS05815.1"/>
    <property type="molecule type" value="Genomic_DNA"/>
</dbReference>
<dbReference type="RefSeq" id="WP_003728333.1">
    <property type="nucleotide sequence ID" value="NC_012488.1"/>
</dbReference>
<dbReference type="SMR" id="C1KWY8"/>
<dbReference type="KEGG" id="lmc:Lm4b_02056"/>
<dbReference type="HOGENOM" id="CLU_037404_0_1_9"/>
<dbReference type="UniPathway" id="UPA00219"/>
<dbReference type="GO" id="GO:0005886">
    <property type="term" value="C:plasma membrane"/>
    <property type="evidence" value="ECO:0007669"/>
    <property type="project" value="UniProtKB-SubCell"/>
</dbReference>
<dbReference type="GO" id="GO:0051991">
    <property type="term" value="F:UDP-N-acetyl-D-glucosamine:N-acetylmuramoyl-L-alanyl-D-glutamyl-meso-2,6-diaminopimelyl-D-alanyl-D-alanine-diphosphoundecaprenol 4-beta-N-acetylglucosaminlytransferase activity"/>
    <property type="evidence" value="ECO:0007669"/>
    <property type="project" value="RHEA"/>
</dbReference>
<dbReference type="GO" id="GO:0050511">
    <property type="term" value="F:undecaprenyldiphospho-muramoylpentapeptide beta-N-acetylglucosaminyltransferase activity"/>
    <property type="evidence" value="ECO:0007669"/>
    <property type="project" value="UniProtKB-UniRule"/>
</dbReference>
<dbReference type="GO" id="GO:0005975">
    <property type="term" value="P:carbohydrate metabolic process"/>
    <property type="evidence" value="ECO:0007669"/>
    <property type="project" value="InterPro"/>
</dbReference>
<dbReference type="GO" id="GO:0051301">
    <property type="term" value="P:cell division"/>
    <property type="evidence" value="ECO:0007669"/>
    <property type="project" value="UniProtKB-KW"/>
</dbReference>
<dbReference type="GO" id="GO:0071555">
    <property type="term" value="P:cell wall organization"/>
    <property type="evidence" value="ECO:0007669"/>
    <property type="project" value="UniProtKB-KW"/>
</dbReference>
<dbReference type="GO" id="GO:0030259">
    <property type="term" value="P:lipid glycosylation"/>
    <property type="evidence" value="ECO:0007669"/>
    <property type="project" value="UniProtKB-UniRule"/>
</dbReference>
<dbReference type="GO" id="GO:0009252">
    <property type="term" value="P:peptidoglycan biosynthetic process"/>
    <property type="evidence" value="ECO:0007669"/>
    <property type="project" value="UniProtKB-UniRule"/>
</dbReference>
<dbReference type="GO" id="GO:0008360">
    <property type="term" value="P:regulation of cell shape"/>
    <property type="evidence" value="ECO:0007669"/>
    <property type="project" value="UniProtKB-KW"/>
</dbReference>
<dbReference type="CDD" id="cd03785">
    <property type="entry name" value="GT28_MurG"/>
    <property type="match status" value="1"/>
</dbReference>
<dbReference type="Gene3D" id="3.40.50.2000">
    <property type="entry name" value="Glycogen Phosphorylase B"/>
    <property type="match status" value="2"/>
</dbReference>
<dbReference type="HAMAP" id="MF_00033">
    <property type="entry name" value="MurG"/>
    <property type="match status" value="1"/>
</dbReference>
<dbReference type="InterPro" id="IPR006009">
    <property type="entry name" value="GlcNAc_MurG"/>
</dbReference>
<dbReference type="InterPro" id="IPR007235">
    <property type="entry name" value="Glyco_trans_28_C"/>
</dbReference>
<dbReference type="InterPro" id="IPR004276">
    <property type="entry name" value="GlycoTrans_28_N"/>
</dbReference>
<dbReference type="NCBIfam" id="TIGR01133">
    <property type="entry name" value="murG"/>
    <property type="match status" value="1"/>
</dbReference>
<dbReference type="PANTHER" id="PTHR21015:SF22">
    <property type="entry name" value="GLYCOSYLTRANSFERASE"/>
    <property type="match status" value="1"/>
</dbReference>
<dbReference type="PANTHER" id="PTHR21015">
    <property type="entry name" value="UDP-N-ACETYLGLUCOSAMINE--N-ACETYLMURAMYL-(PENTAPEPTIDE) PYROPHOSPHORYL-UNDECAPRENOL N-ACETYLGLUCOSAMINE TRANSFERASE 1"/>
    <property type="match status" value="1"/>
</dbReference>
<dbReference type="Pfam" id="PF04101">
    <property type="entry name" value="Glyco_tran_28_C"/>
    <property type="match status" value="1"/>
</dbReference>
<dbReference type="Pfam" id="PF03033">
    <property type="entry name" value="Glyco_transf_28"/>
    <property type="match status" value="1"/>
</dbReference>
<dbReference type="SUPFAM" id="SSF53756">
    <property type="entry name" value="UDP-Glycosyltransferase/glycogen phosphorylase"/>
    <property type="match status" value="1"/>
</dbReference>
<gene>
    <name evidence="1" type="primary">murG</name>
    <name type="ordered locus">Lm4b_02056</name>
</gene>
<name>MURG_LISMC</name>
<feature type="chain" id="PRO_1000202024" description="UDP-N-acetylglucosamine--N-acetylmuramyl-(pentapeptide) pyrophosphoryl-undecaprenol N-acetylglucosamine transferase">
    <location>
        <begin position="1"/>
        <end position="363"/>
    </location>
</feature>
<feature type="binding site" evidence="1">
    <location>
        <begin position="10"/>
        <end position="12"/>
    </location>
    <ligand>
        <name>UDP-N-acetyl-alpha-D-glucosamine</name>
        <dbReference type="ChEBI" id="CHEBI:57705"/>
    </ligand>
</feature>
<feature type="binding site" evidence="1">
    <location>
        <position position="124"/>
    </location>
    <ligand>
        <name>UDP-N-acetyl-alpha-D-glucosamine</name>
        <dbReference type="ChEBI" id="CHEBI:57705"/>
    </ligand>
</feature>
<feature type="binding site" evidence="1">
    <location>
        <position position="195"/>
    </location>
    <ligand>
        <name>UDP-N-acetyl-alpha-D-glucosamine</name>
        <dbReference type="ChEBI" id="CHEBI:57705"/>
    </ligand>
</feature>
<feature type="binding site" evidence="1">
    <location>
        <position position="250"/>
    </location>
    <ligand>
        <name>UDP-N-acetyl-alpha-D-glucosamine</name>
        <dbReference type="ChEBI" id="CHEBI:57705"/>
    </ligand>
</feature>
<feature type="binding site" evidence="1">
    <location>
        <position position="295"/>
    </location>
    <ligand>
        <name>UDP-N-acetyl-alpha-D-glucosamine</name>
        <dbReference type="ChEBI" id="CHEBI:57705"/>
    </ligand>
</feature>